<reference key="1">
    <citation type="submission" date="2005-08" db="EMBL/GenBank/DDBJ databases">
        <title>Complete sequence of chromosome 1 of Nitrosospira multiformis ATCC 25196.</title>
        <authorList>
            <person name="Copeland A."/>
            <person name="Lucas S."/>
            <person name="Lapidus A."/>
            <person name="Barry K."/>
            <person name="Detter J.C."/>
            <person name="Glavina T."/>
            <person name="Hammon N."/>
            <person name="Israni S."/>
            <person name="Pitluck S."/>
            <person name="Chain P."/>
            <person name="Malfatti S."/>
            <person name="Shin M."/>
            <person name="Vergez L."/>
            <person name="Schmutz J."/>
            <person name="Larimer F."/>
            <person name="Land M."/>
            <person name="Hauser L."/>
            <person name="Kyrpides N."/>
            <person name="Lykidis A."/>
            <person name="Richardson P."/>
        </authorList>
    </citation>
    <scope>NUCLEOTIDE SEQUENCE [LARGE SCALE GENOMIC DNA]</scope>
    <source>
        <strain>ATCC 25196 / NCIMB 11849 / C 71</strain>
    </source>
</reference>
<keyword id="KW-0963">Cytoplasm</keyword>
<keyword id="KW-0251">Elongation factor</keyword>
<keyword id="KW-0342">GTP-binding</keyword>
<keyword id="KW-0378">Hydrolase</keyword>
<keyword id="KW-0460">Magnesium</keyword>
<keyword id="KW-0479">Metal-binding</keyword>
<keyword id="KW-0547">Nucleotide-binding</keyword>
<keyword id="KW-0648">Protein biosynthesis</keyword>
<keyword id="KW-1185">Reference proteome</keyword>
<protein>
    <recommendedName>
        <fullName evidence="2">Elongation factor Tu</fullName>
        <shortName evidence="2">EF-Tu</shortName>
        <ecNumber evidence="2">3.6.5.3</ecNumber>
    </recommendedName>
</protein>
<sequence length="396" mass="42925">MAKSKFERTKPHINVGTIGHVDHGKTTLTAAITMVLAKKFGGEAKSYAQIDSAPEEKARGITINTSHVEYETEKRHYAHVDCPGHADYVKNMITGAAQMDGAILVVSAADGPMPQTREHILLARQVGVPYIIVYMNKADMVDDAELLELVEMEVRELLSKYNFPGDDTPIVIGSALKALEGDQSDIGEPSIYKLAAALDSYIPEPQRAVDGAFLMPVEDVFSISGRGTVVTGRVERGVIKVGEDIEIVGLKPTTKTVCTGVEMFRKLLDQGQAGDNVGVLLRGTKREEVERGQVLAKPGTITPHTKFTAEIYVLSKEEGGRHTPFFQGYRPQFYFRTTDVTGAIELPAGTEMVMPGDNVSVTVNLIAPIAMEEGLRFAIREGGRTVGAGVVAKIIE</sequence>
<name>EFTU_NITMU</name>
<organism>
    <name type="scientific">Nitrosospira multiformis (strain ATCC 25196 / NCIMB 11849 / C 71)</name>
    <dbReference type="NCBI Taxonomy" id="323848"/>
    <lineage>
        <taxon>Bacteria</taxon>
        <taxon>Pseudomonadati</taxon>
        <taxon>Pseudomonadota</taxon>
        <taxon>Betaproteobacteria</taxon>
        <taxon>Nitrosomonadales</taxon>
        <taxon>Nitrosomonadaceae</taxon>
        <taxon>Nitrosospira</taxon>
    </lineage>
</organism>
<feature type="chain" id="PRO_0000337447" description="Elongation factor Tu">
    <location>
        <begin position="1"/>
        <end position="396"/>
    </location>
</feature>
<feature type="domain" description="tr-type G">
    <location>
        <begin position="10"/>
        <end position="206"/>
    </location>
</feature>
<feature type="region of interest" description="G1" evidence="1">
    <location>
        <begin position="19"/>
        <end position="26"/>
    </location>
</feature>
<feature type="region of interest" description="G2" evidence="1">
    <location>
        <begin position="60"/>
        <end position="64"/>
    </location>
</feature>
<feature type="region of interest" description="G3" evidence="1">
    <location>
        <begin position="81"/>
        <end position="84"/>
    </location>
</feature>
<feature type="region of interest" description="G4" evidence="1">
    <location>
        <begin position="136"/>
        <end position="139"/>
    </location>
</feature>
<feature type="region of interest" description="G5" evidence="1">
    <location>
        <begin position="174"/>
        <end position="176"/>
    </location>
</feature>
<feature type="binding site" evidence="2">
    <location>
        <begin position="19"/>
        <end position="26"/>
    </location>
    <ligand>
        <name>GTP</name>
        <dbReference type="ChEBI" id="CHEBI:37565"/>
    </ligand>
</feature>
<feature type="binding site" evidence="2">
    <location>
        <position position="26"/>
    </location>
    <ligand>
        <name>Mg(2+)</name>
        <dbReference type="ChEBI" id="CHEBI:18420"/>
    </ligand>
</feature>
<feature type="binding site" evidence="2">
    <location>
        <begin position="81"/>
        <end position="85"/>
    </location>
    <ligand>
        <name>GTP</name>
        <dbReference type="ChEBI" id="CHEBI:37565"/>
    </ligand>
</feature>
<feature type="binding site" evidence="2">
    <location>
        <begin position="136"/>
        <end position="139"/>
    </location>
    <ligand>
        <name>GTP</name>
        <dbReference type="ChEBI" id="CHEBI:37565"/>
    </ligand>
</feature>
<evidence type="ECO:0000250" key="1"/>
<evidence type="ECO:0000255" key="2">
    <source>
        <dbReference type="HAMAP-Rule" id="MF_00118"/>
    </source>
</evidence>
<proteinExistence type="inferred from homology"/>
<comment type="function">
    <text evidence="2">GTP hydrolase that promotes the GTP-dependent binding of aminoacyl-tRNA to the A-site of ribosomes during protein biosynthesis.</text>
</comment>
<comment type="catalytic activity">
    <reaction evidence="2">
        <text>GTP + H2O = GDP + phosphate + H(+)</text>
        <dbReference type="Rhea" id="RHEA:19669"/>
        <dbReference type="ChEBI" id="CHEBI:15377"/>
        <dbReference type="ChEBI" id="CHEBI:15378"/>
        <dbReference type="ChEBI" id="CHEBI:37565"/>
        <dbReference type="ChEBI" id="CHEBI:43474"/>
        <dbReference type="ChEBI" id="CHEBI:58189"/>
        <dbReference type="EC" id="3.6.5.3"/>
    </reaction>
    <physiologicalReaction direction="left-to-right" evidence="2">
        <dbReference type="Rhea" id="RHEA:19670"/>
    </physiologicalReaction>
</comment>
<comment type="subunit">
    <text evidence="2">Monomer.</text>
</comment>
<comment type="subcellular location">
    <subcellularLocation>
        <location evidence="2">Cytoplasm</location>
    </subcellularLocation>
</comment>
<comment type="similarity">
    <text evidence="2">Belongs to the TRAFAC class translation factor GTPase superfamily. Classic translation factor GTPase family. EF-Tu/EF-1A subfamily.</text>
</comment>
<gene>
    <name evidence="2" type="primary">tuf1</name>
    <name type="ordered locus">Nmul_A0752</name>
</gene>
<gene>
    <name evidence="2" type="primary">tuf2</name>
    <name type="ordered locus">Nmul_A0765</name>
</gene>
<accession>Q2YAZ9</accession>
<dbReference type="EC" id="3.6.5.3" evidence="2"/>
<dbReference type="EMBL" id="CP000103">
    <property type="protein sequence ID" value="ABB74059.1"/>
    <property type="molecule type" value="Genomic_DNA"/>
</dbReference>
<dbReference type="EMBL" id="CP000103">
    <property type="protein sequence ID" value="ABB74072.1"/>
    <property type="molecule type" value="Genomic_DNA"/>
</dbReference>
<dbReference type="RefSeq" id="WP_011380109.1">
    <property type="nucleotide sequence ID" value="NC_007614.1"/>
</dbReference>
<dbReference type="SMR" id="Q2YAZ9"/>
<dbReference type="STRING" id="323848.Nmul_A0752"/>
<dbReference type="KEGG" id="nmu:Nmul_A0752"/>
<dbReference type="KEGG" id="nmu:Nmul_A0765"/>
<dbReference type="eggNOG" id="COG0050">
    <property type="taxonomic scope" value="Bacteria"/>
</dbReference>
<dbReference type="HOGENOM" id="CLU_007265_0_0_4"/>
<dbReference type="OrthoDB" id="9803139at2"/>
<dbReference type="Proteomes" id="UP000002718">
    <property type="component" value="Chromosome"/>
</dbReference>
<dbReference type="GO" id="GO:0005829">
    <property type="term" value="C:cytosol"/>
    <property type="evidence" value="ECO:0007669"/>
    <property type="project" value="TreeGrafter"/>
</dbReference>
<dbReference type="GO" id="GO:0005525">
    <property type="term" value="F:GTP binding"/>
    <property type="evidence" value="ECO:0007669"/>
    <property type="project" value="UniProtKB-UniRule"/>
</dbReference>
<dbReference type="GO" id="GO:0003924">
    <property type="term" value="F:GTPase activity"/>
    <property type="evidence" value="ECO:0007669"/>
    <property type="project" value="InterPro"/>
</dbReference>
<dbReference type="GO" id="GO:0097216">
    <property type="term" value="F:guanosine tetraphosphate binding"/>
    <property type="evidence" value="ECO:0007669"/>
    <property type="project" value="UniProtKB-ARBA"/>
</dbReference>
<dbReference type="GO" id="GO:0003746">
    <property type="term" value="F:translation elongation factor activity"/>
    <property type="evidence" value="ECO:0007669"/>
    <property type="project" value="UniProtKB-UniRule"/>
</dbReference>
<dbReference type="CDD" id="cd01884">
    <property type="entry name" value="EF_Tu"/>
    <property type="match status" value="1"/>
</dbReference>
<dbReference type="CDD" id="cd03697">
    <property type="entry name" value="EFTU_II"/>
    <property type="match status" value="1"/>
</dbReference>
<dbReference type="CDD" id="cd03707">
    <property type="entry name" value="EFTU_III"/>
    <property type="match status" value="1"/>
</dbReference>
<dbReference type="FunFam" id="2.40.30.10:FF:000001">
    <property type="entry name" value="Elongation factor Tu"/>
    <property type="match status" value="1"/>
</dbReference>
<dbReference type="FunFam" id="3.40.50.300:FF:000003">
    <property type="entry name" value="Elongation factor Tu"/>
    <property type="match status" value="1"/>
</dbReference>
<dbReference type="Gene3D" id="3.40.50.300">
    <property type="entry name" value="P-loop containing nucleotide triphosphate hydrolases"/>
    <property type="match status" value="1"/>
</dbReference>
<dbReference type="Gene3D" id="2.40.30.10">
    <property type="entry name" value="Translation factors"/>
    <property type="match status" value="2"/>
</dbReference>
<dbReference type="HAMAP" id="MF_00118_B">
    <property type="entry name" value="EF_Tu_B"/>
    <property type="match status" value="1"/>
</dbReference>
<dbReference type="InterPro" id="IPR041709">
    <property type="entry name" value="EF-Tu_GTP-bd"/>
</dbReference>
<dbReference type="InterPro" id="IPR050055">
    <property type="entry name" value="EF-Tu_GTPase"/>
</dbReference>
<dbReference type="InterPro" id="IPR004161">
    <property type="entry name" value="EFTu-like_2"/>
</dbReference>
<dbReference type="InterPro" id="IPR033720">
    <property type="entry name" value="EFTU_2"/>
</dbReference>
<dbReference type="InterPro" id="IPR031157">
    <property type="entry name" value="G_TR_CS"/>
</dbReference>
<dbReference type="InterPro" id="IPR027417">
    <property type="entry name" value="P-loop_NTPase"/>
</dbReference>
<dbReference type="InterPro" id="IPR005225">
    <property type="entry name" value="Small_GTP-bd"/>
</dbReference>
<dbReference type="InterPro" id="IPR000795">
    <property type="entry name" value="T_Tr_GTP-bd_dom"/>
</dbReference>
<dbReference type="InterPro" id="IPR009000">
    <property type="entry name" value="Transl_B-barrel_sf"/>
</dbReference>
<dbReference type="InterPro" id="IPR009001">
    <property type="entry name" value="Transl_elong_EF1A/Init_IF2_C"/>
</dbReference>
<dbReference type="InterPro" id="IPR004541">
    <property type="entry name" value="Transl_elong_EFTu/EF1A_bac/org"/>
</dbReference>
<dbReference type="InterPro" id="IPR004160">
    <property type="entry name" value="Transl_elong_EFTu/EF1A_C"/>
</dbReference>
<dbReference type="NCBIfam" id="TIGR00485">
    <property type="entry name" value="EF-Tu"/>
    <property type="match status" value="1"/>
</dbReference>
<dbReference type="NCBIfam" id="NF000766">
    <property type="entry name" value="PRK00049.1"/>
    <property type="match status" value="1"/>
</dbReference>
<dbReference type="NCBIfam" id="NF009372">
    <property type="entry name" value="PRK12735.1"/>
    <property type="match status" value="1"/>
</dbReference>
<dbReference type="NCBIfam" id="NF009373">
    <property type="entry name" value="PRK12736.1"/>
    <property type="match status" value="1"/>
</dbReference>
<dbReference type="NCBIfam" id="TIGR00231">
    <property type="entry name" value="small_GTP"/>
    <property type="match status" value="1"/>
</dbReference>
<dbReference type="PANTHER" id="PTHR43721:SF22">
    <property type="entry name" value="ELONGATION FACTOR TU, MITOCHONDRIAL"/>
    <property type="match status" value="1"/>
</dbReference>
<dbReference type="PANTHER" id="PTHR43721">
    <property type="entry name" value="ELONGATION FACTOR TU-RELATED"/>
    <property type="match status" value="1"/>
</dbReference>
<dbReference type="Pfam" id="PF00009">
    <property type="entry name" value="GTP_EFTU"/>
    <property type="match status" value="1"/>
</dbReference>
<dbReference type="Pfam" id="PF03144">
    <property type="entry name" value="GTP_EFTU_D2"/>
    <property type="match status" value="1"/>
</dbReference>
<dbReference type="Pfam" id="PF03143">
    <property type="entry name" value="GTP_EFTU_D3"/>
    <property type="match status" value="1"/>
</dbReference>
<dbReference type="PRINTS" id="PR00315">
    <property type="entry name" value="ELONGATNFCT"/>
</dbReference>
<dbReference type="SUPFAM" id="SSF50465">
    <property type="entry name" value="EF-Tu/eEF-1alpha/eIF2-gamma C-terminal domain"/>
    <property type="match status" value="1"/>
</dbReference>
<dbReference type="SUPFAM" id="SSF52540">
    <property type="entry name" value="P-loop containing nucleoside triphosphate hydrolases"/>
    <property type="match status" value="1"/>
</dbReference>
<dbReference type="SUPFAM" id="SSF50447">
    <property type="entry name" value="Translation proteins"/>
    <property type="match status" value="1"/>
</dbReference>
<dbReference type="PROSITE" id="PS00301">
    <property type="entry name" value="G_TR_1"/>
    <property type="match status" value="1"/>
</dbReference>
<dbReference type="PROSITE" id="PS51722">
    <property type="entry name" value="G_TR_2"/>
    <property type="match status" value="1"/>
</dbReference>